<reference key="1">
    <citation type="submission" date="2006-06" db="EMBL/GenBank/DDBJ databases">
        <title>Complete sequence of Rubrobacter xylanophilus DSM 9941.</title>
        <authorList>
            <consortium name="US DOE Joint Genome Institute"/>
            <person name="Copeland A."/>
            <person name="Lucas S."/>
            <person name="Lapidus A."/>
            <person name="Barry K."/>
            <person name="Detter J.C."/>
            <person name="Glavina del Rio T."/>
            <person name="Hammon N."/>
            <person name="Israni S."/>
            <person name="Dalin E."/>
            <person name="Tice H."/>
            <person name="Pitluck S."/>
            <person name="Munk A.C."/>
            <person name="Brettin T."/>
            <person name="Bruce D."/>
            <person name="Han C."/>
            <person name="Tapia R."/>
            <person name="Gilna P."/>
            <person name="Schmutz J."/>
            <person name="Larimer F."/>
            <person name="Land M."/>
            <person name="Hauser L."/>
            <person name="Kyrpides N."/>
            <person name="Lykidis A."/>
            <person name="da Costa M.S."/>
            <person name="Rainey F.A."/>
            <person name="Empadinhas N."/>
            <person name="Jolivet E."/>
            <person name="Battista J.R."/>
            <person name="Richardson P."/>
        </authorList>
    </citation>
    <scope>NUCLEOTIDE SEQUENCE [LARGE SCALE GENOMIC DNA]</scope>
    <source>
        <strain>DSM 9941 / JCM 11954 / NBRC 16129 / PRD-1</strain>
    </source>
</reference>
<dbReference type="EMBL" id="CP000386">
    <property type="protein sequence ID" value="ABG04448.1"/>
    <property type="molecule type" value="Genomic_DNA"/>
</dbReference>
<dbReference type="RefSeq" id="WP_011564465.1">
    <property type="nucleotide sequence ID" value="NC_008148.1"/>
</dbReference>
<dbReference type="SMR" id="Q1AVY0"/>
<dbReference type="STRING" id="266117.Rxyl_1486"/>
<dbReference type="KEGG" id="rxy:Rxyl_1486"/>
<dbReference type="eggNOG" id="COG1799">
    <property type="taxonomic scope" value="Bacteria"/>
</dbReference>
<dbReference type="HOGENOM" id="CLU_078499_4_0_11"/>
<dbReference type="OrthoDB" id="3731101at2"/>
<dbReference type="PhylomeDB" id="Q1AVY0"/>
<dbReference type="Proteomes" id="UP000006637">
    <property type="component" value="Chromosome"/>
</dbReference>
<dbReference type="GO" id="GO:0005737">
    <property type="term" value="C:cytoplasm"/>
    <property type="evidence" value="ECO:0007669"/>
    <property type="project" value="UniProtKB-SubCell"/>
</dbReference>
<dbReference type="GO" id="GO:0000917">
    <property type="term" value="P:division septum assembly"/>
    <property type="evidence" value="ECO:0007669"/>
    <property type="project" value="UniProtKB-KW"/>
</dbReference>
<dbReference type="GO" id="GO:0043093">
    <property type="term" value="P:FtsZ-dependent cytokinesis"/>
    <property type="evidence" value="ECO:0007669"/>
    <property type="project" value="UniProtKB-UniRule"/>
</dbReference>
<dbReference type="Gene3D" id="3.30.110.150">
    <property type="entry name" value="SepF-like protein"/>
    <property type="match status" value="1"/>
</dbReference>
<dbReference type="HAMAP" id="MF_01197">
    <property type="entry name" value="SepF"/>
    <property type="match status" value="1"/>
</dbReference>
<dbReference type="InterPro" id="IPR023052">
    <property type="entry name" value="Cell_div_SepF"/>
</dbReference>
<dbReference type="InterPro" id="IPR007561">
    <property type="entry name" value="Cell_div_SepF/SepF-rel"/>
</dbReference>
<dbReference type="InterPro" id="IPR038594">
    <property type="entry name" value="SepF-like_sf"/>
</dbReference>
<dbReference type="PANTHER" id="PTHR35798">
    <property type="entry name" value="CELL DIVISION PROTEIN SEPF"/>
    <property type="match status" value="1"/>
</dbReference>
<dbReference type="PANTHER" id="PTHR35798:SF1">
    <property type="entry name" value="CELL DIVISION PROTEIN SEPF"/>
    <property type="match status" value="1"/>
</dbReference>
<dbReference type="Pfam" id="PF04472">
    <property type="entry name" value="SepF"/>
    <property type="match status" value="1"/>
</dbReference>
<organism>
    <name type="scientific">Rubrobacter xylanophilus (strain DSM 9941 / JCM 11954 / NBRC 16129 / PRD-1)</name>
    <dbReference type="NCBI Taxonomy" id="266117"/>
    <lineage>
        <taxon>Bacteria</taxon>
        <taxon>Bacillati</taxon>
        <taxon>Actinomycetota</taxon>
        <taxon>Rubrobacteria</taxon>
        <taxon>Rubrobacterales</taxon>
        <taxon>Rubrobacteraceae</taxon>
        <taxon>Rubrobacter</taxon>
    </lineage>
</organism>
<comment type="function">
    <text evidence="1">Cell division protein that is part of the divisome complex and is recruited early to the Z-ring. Probably stimulates Z-ring formation, perhaps through the cross-linking of FtsZ protofilaments. Its function overlaps with FtsA.</text>
</comment>
<comment type="subunit">
    <text evidence="1">Homodimer. Interacts with FtsZ.</text>
</comment>
<comment type="subcellular location">
    <subcellularLocation>
        <location evidence="1">Cytoplasm</location>
    </subcellularLocation>
    <text evidence="1">Localizes to the division site, in a FtsZ-dependent manner.</text>
</comment>
<comment type="similarity">
    <text evidence="1">Belongs to the SepF family.</text>
</comment>
<evidence type="ECO:0000255" key="1">
    <source>
        <dbReference type="HAMAP-Rule" id="MF_01197"/>
    </source>
</evidence>
<evidence type="ECO:0000256" key="2">
    <source>
        <dbReference type="SAM" id="MobiDB-lite"/>
    </source>
</evidence>
<sequence>MGVREQLERVAAYFGFGVDDDYYEDEEEEERYAKGSYGNGGRTGEPSPAVRRLGRSERSSAFGTSLGDLFGSEGPERGRYAHNPPHLRAVPDQRPTRVSVVEPSSFNDAQALADRFKRQQPVILNLQNVNSDLSRRMVDFCAGLTYALDGHIQTVANRVFLLTPRDVEVSAEERKMLAERAFFNQL</sequence>
<gene>
    <name evidence="1" type="primary">sepF</name>
    <name type="ordered locus">Rxyl_1486</name>
</gene>
<feature type="chain" id="PRO_0000334070" description="Cell division protein SepF">
    <location>
        <begin position="1"/>
        <end position="186"/>
    </location>
</feature>
<feature type="region of interest" description="Disordered" evidence="2">
    <location>
        <begin position="24"/>
        <end position="91"/>
    </location>
</feature>
<proteinExistence type="inferred from homology"/>
<name>SEPF_RUBXD</name>
<accession>Q1AVY0</accession>
<protein>
    <recommendedName>
        <fullName evidence="1">Cell division protein SepF</fullName>
    </recommendedName>
</protein>
<keyword id="KW-0131">Cell cycle</keyword>
<keyword id="KW-0132">Cell division</keyword>
<keyword id="KW-0963">Cytoplasm</keyword>
<keyword id="KW-1185">Reference proteome</keyword>
<keyword id="KW-0717">Septation</keyword>